<organism>
    <name type="scientific">Moniliophthora roreri</name>
    <name type="common">Frosty pod rot fungus</name>
    <name type="synonym">Monilia roreri</name>
    <dbReference type="NCBI Taxonomy" id="221103"/>
    <lineage>
        <taxon>Eukaryota</taxon>
        <taxon>Fungi</taxon>
        <taxon>Dikarya</taxon>
        <taxon>Basidiomycota</taxon>
        <taxon>Agaricomycotina</taxon>
        <taxon>Agaricomycetes</taxon>
        <taxon>Agaricomycetidae</taxon>
        <taxon>Agaricales</taxon>
        <taxon>Marasmiineae</taxon>
        <taxon>Marasmiaceae</taxon>
        <taxon>Moniliophthora</taxon>
    </lineage>
</organism>
<accession>A0A0W0FPC8</accession>
<keyword id="KW-0147">Chitin-binding</keyword>
<keyword id="KW-1185">Reference proteome</keyword>
<keyword id="KW-0964">Secreted</keyword>
<keyword id="KW-0732">Signal</keyword>
<keyword id="KW-0843">Virulence</keyword>
<protein>
    <recommendedName>
        <fullName evidence="4">chitinase-like effector</fullName>
    </recommendedName>
</protein>
<feature type="signal peptide" evidence="1">
    <location>
        <begin position="1"/>
        <end position="23"/>
    </location>
</feature>
<feature type="chain" id="PRO_5033245804" description="chitinase-like effector">
    <location>
        <begin position="24"/>
        <end position="406"/>
    </location>
</feature>
<feature type="domain" description="GH18" evidence="2">
    <location>
        <begin position="26"/>
        <end position="405"/>
    </location>
</feature>
<feature type="binding site" evidence="2">
    <location>
        <position position="138"/>
    </location>
    <ligand>
        <name>chitin</name>
        <dbReference type="ChEBI" id="CHEBI:17029"/>
    </ligand>
</feature>
<feature type="binding site" evidence="2">
    <location>
        <position position="384"/>
    </location>
    <ligand>
        <name>chitin</name>
        <dbReference type="ChEBI" id="CHEBI:17029"/>
    </ligand>
</feature>
<evidence type="ECO:0000255" key="1"/>
<evidence type="ECO:0000255" key="2">
    <source>
        <dbReference type="PROSITE-ProRule" id="PRU01258"/>
    </source>
</evidence>
<evidence type="ECO:0000269" key="3">
    <source>
    </source>
</evidence>
<evidence type="ECO:0000303" key="4">
    <source>
    </source>
</evidence>
<evidence type="ECO:0000305" key="5"/>
<evidence type="ECO:0000305" key="6">
    <source>
    </source>
</evidence>
<gene>
    <name type="primary">Chi</name>
    <name type="ORF">WG66_9206</name>
</gene>
<sequence>MLTLLPSLILLLSTLSLSTPANAGAAIAKAYYPGWGSDDFPLSKVTWSKYTHLTYAFAKTTKDGGLTLEGSNPGGLKPFVKAAHENGVKACFSIGGWTGSQYFSTAVSTPEKRTAFVKTIVDFAKKYDADCIDLNWEYPAKQGIGCNTIDKDDTPHFLSFLEELHAATELPISAAVGIVPFNDAAGNPITDVSGFAKVFEHIVIMNYDVWGPWGSTVGPNAPLNDTCAAPANQQGSAVSAVNAWIKAGMPAEKIVLGVPAYGHGFTVKKEDAFQKGSTTKLAKYPPFDNKNRPNGDKWDDKAGKDVCGNDNPAGGIFTFWGMVDNGYLKEDGTPKVPHRFDDCSKTPYVYNPDKQIMISYDDAKSMDHKGHFIKNFGLAGFSLWNAAGDYHDILVDAVRHGAGFKN</sequence>
<dbReference type="EMBL" id="MH481743">
    <property type="protein sequence ID" value="AYA60264.1"/>
    <property type="molecule type" value="Genomic_DNA"/>
</dbReference>
<dbReference type="EMBL" id="LATX01001774">
    <property type="protein sequence ID" value="KTB38239.1"/>
    <property type="molecule type" value="Genomic_DNA"/>
</dbReference>
<dbReference type="SMR" id="A0A0W0FPC8"/>
<dbReference type="eggNOG" id="KOG2806">
    <property type="taxonomic scope" value="Eukaryota"/>
</dbReference>
<dbReference type="Proteomes" id="UP000054988">
    <property type="component" value="Unassembled WGS sequence"/>
</dbReference>
<dbReference type="GO" id="GO:0005576">
    <property type="term" value="C:extracellular region"/>
    <property type="evidence" value="ECO:0007669"/>
    <property type="project" value="UniProtKB-SubCell"/>
</dbReference>
<dbReference type="GO" id="GO:0008061">
    <property type="term" value="F:chitin binding"/>
    <property type="evidence" value="ECO:0000314"/>
    <property type="project" value="PHI-base"/>
</dbReference>
<dbReference type="GO" id="GO:0004568">
    <property type="term" value="F:chitinase activity"/>
    <property type="evidence" value="ECO:0000314"/>
    <property type="project" value="PHI-base"/>
</dbReference>
<dbReference type="GO" id="GO:0008843">
    <property type="term" value="F:endochitinase activity"/>
    <property type="evidence" value="ECO:0007669"/>
    <property type="project" value="UniProtKB-EC"/>
</dbReference>
<dbReference type="GO" id="GO:0005975">
    <property type="term" value="P:carbohydrate metabolic process"/>
    <property type="evidence" value="ECO:0007669"/>
    <property type="project" value="InterPro"/>
</dbReference>
<dbReference type="GO" id="GO:0006032">
    <property type="term" value="P:chitin catabolic process"/>
    <property type="evidence" value="ECO:0007669"/>
    <property type="project" value="TreeGrafter"/>
</dbReference>
<dbReference type="Gene3D" id="3.10.50.10">
    <property type="match status" value="1"/>
</dbReference>
<dbReference type="Gene3D" id="3.20.20.80">
    <property type="entry name" value="Glycosidases"/>
    <property type="match status" value="1"/>
</dbReference>
<dbReference type="InterPro" id="IPR011583">
    <property type="entry name" value="Chitinase_II/V-like_cat"/>
</dbReference>
<dbReference type="InterPro" id="IPR029070">
    <property type="entry name" value="Chitinase_insertion_sf"/>
</dbReference>
<dbReference type="InterPro" id="IPR001223">
    <property type="entry name" value="Glyco_hydro18_cat"/>
</dbReference>
<dbReference type="InterPro" id="IPR017853">
    <property type="entry name" value="Glycoside_hydrolase_SF"/>
</dbReference>
<dbReference type="InterPro" id="IPR050314">
    <property type="entry name" value="Glycosyl_Hydrlase_18"/>
</dbReference>
<dbReference type="PANTHER" id="PTHR11177">
    <property type="entry name" value="CHITINASE"/>
    <property type="match status" value="1"/>
</dbReference>
<dbReference type="PANTHER" id="PTHR11177:SF392">
    <property type="entry name" value="HAP41P"/>
    <property type="match status" value="1"/>
</dbReference>
<dbReference type="Pfam" id="PF00704">
    <property type="entry name" value="Glyco_hydro_18"/>
    <property type="match status" value="1"/>
</dbReference>
<dbReference type="SMART" id="SM00636">
    <property type="entry name" value="Glyco_18"/>
    <property type="match status" value="1"/>
</dbReference>
<dbReference type="SUPFAM" id="SSF51445">
    <property type="entry name" value="(Trans)glycosidases"/>
    <property type="match status" value="1"/>
</dbReference>
<dbReference type="SUPFAM" id="SSF54556">
    <property type="entry name" value="Chitinase insertion domain"/>
    <property type="match status" value="1"/>
</dbReference>
<dbReference type="PROSITE" id="PS51910">
    <property type="entry name" value="GH18_2"/>
    <property type="match status" value="1"/>
</dbReference>
<name>CHI_MONRR</name>
<comment type="function">
    <text evidence="3">Catalytically impaired chitinase that binds efficiently to chitin, but not to chitosan, xylan, or cellulose (PubMed:30220500). Despite the lack of chitinolytic activity, retains substrate binding specificity and acts as an effector to prevent chitin-triggered immunity by sequestering immunogenic chitin fragments (PubMed:30220500).</text>
</comment>
<comment type="subcellular location">
    <subcellularLocation>
        <location evidence="6">Secreted</location>
    </subcellularLocation>
</comment>
<comment type="induction">
    <text evidence="3">Expressed during the biotrophic interaction with cacao.</text>
</comment>
<comment type="miscellaneous">
    <text evidence="5">In plants, chitin acts as a microbe-associated molecular pattern (MAMP) that is recognized by lysin motif (LysM)-containing plant cell surface-localized pattern recognition receptors (PRRs) that activate a plethora of downstream immune responses.</text>
</comment>
<comment type="similarity">
    <text evidence="2">Belongs to the glycosyl hydrolase 18 family.</text>
</comment>
<comment type="caution">
    <text evidence="3">Chi contains a degenerated catalytic site with a substitution in one of the aspartates of the catalytic motif (D135N) and is, therefore, likely enzymatically inactive.</text>
</comment>
<proteinExistence type="evidence at protein level"/>
<reference key="1">
    <citation type="submission" date="2015-12" db="EMBL/GenBank/DDBJ databases">
        <title>Draft genome sequence of Moniliophthora roreri, the causal agent of frosty pod rot of cacao.</title>
        <authorList>
            <person name="Aime M.C."/>
            <person name="Diaz-Valderrama J.R."/>
            <person name="Kijpornyongpan T."/>
            <person name="Phillips-Mora W."/>
        </authorList>
    </citation>
    <scope>NUCLEOTIDE SEQUENCE [LARGE SCALE GENOMIC DNA]</scope>
    <source>
        <strain>MCA 2952</strain>
    </source>
</reference>
<reference key="2">
    <citation type="journal article" date="2018" name="Curr. Biol.">
        <title>Suppression of plant immunity by fungal chitinase-like effectors.</title>
        <authorList>
            <person name="Fiorin G.L."/>
            <person name="Sanchez-Vallet A."/>
            <person name="Thomazella D.P.T."/>
            <person name="do Prado P.F.V."/>
            <person name="do Nascimento L.C."/>
            <person name="Figueira A.V.O."/>
            <person name="Thomma B.P.H.J."/>
            <person name="Pereira G.A.G."/>
            <person name="Teixeira P.J.P.L."/>
        </authorList>
    </citation>
    <scope>NUCLEOTIDE SEQUENCE [GENOMIC DNA]</scope>
    <scope>INDUCTION</scope>
    <scope>FUNCTION</scope>
    <scope>CHITIN-BINDING</scope>
    <scope>SUBCELLULAR LOCATION</scope>
    <source>
        <strain>MCA2977</strain>
    </source>
</reference>